<keyword id="KW-0997">Cell inner membrane</keyword>
<keyword id="KW-1003">Cell membrane</keyword>
<keyword id="KW-0472">Membrane</keyword>
<keyword id="KW-0812">Transmembrane</keyword>
<keyword id="KW-1133">Transmembrane helix</keyword>
<accession>B4TPN7</accession>
<dbReference type="EMBL" id="CP001127">
    <property type="protein sequence ID" value="ACF89284.1"/>
    <property type="molecule type" value="Genomic_DNA"/>
</dbReference>
<dbReference type="RefSeq" id="WP_000921423.1">
    <property type="nucleotide sequence ID" value="NC_011094.1"/>
</dbReference>
<dbReference type="KEGG" id="sew:SeSA_A4238"/>
<dbReference type="HOGENOM" id="CLU_032288_0_0_6"/>
<dbReference type="Proteomes" id="UP000001865">
    <property type="component" value="Chromosome"/>
</dbReference>
<dbReference type="GO" id="GO:0005886">
    <property type="term" value="C:plasma membrane"/>
    <property type="evidence" value="ECO:0007669"/>
    <property type="project" value="UniProtKB-SubCell"/>
</dbReference>
<dbReference type="HAMAP" id="MF_00672">
    <property type="entry name" value="UPF0761"/>
    <property type="match status" value="1"/>
</dbReference>
<dbReference type="InterPro" id="IPR023679">
    <property type="entry name" value="UPF0761_bac"/>
</dbReference>
<dbReference type="InterPro" id="IPR017039">
    <property type="entry name" value="Virul_fac_BrkB"/>
</dbReference>
<dbReference type="NCBIfam" id="NF002457">
    <property type="entry name" value="PRK01637.1"/>
    <property type="match status" value="1"/>
</dbReference>
<dbReference type="NCBIfam" id="TIGR00765">
    <property type="entry name" value="yihY_not_rbn"/>
    <property type="match status" value="1"/>
</dbReference>
<dbReference type="PANTHER" id="PTHR30213">
    <property type="entry name" value="INNER MEMBRANE PROTEIN YHJD"/>
    <property type="match status" value="1"/>
</dbReference>
<dbReference type="PANTHER" id="PTHR30213:SF0">
    <property type="entry name" value="UPF0761 MEMBRANE PROTEIN YIHY"/>
    <property type="match status" value="1"/>
</dbReference>
<dbReference type="Pfam" id="PF03631">
    <property type="entry name" value="Virul_fac_BrkB"/>
    <property type="match status" value="1"/>
</dbReference>
<dbReference type="PIRSF" id="PIRSF035875">
    <property type="entry name" value="RNase_BN"/>
    <property type="match status" value="1"/>
</dbReference>
<sequence length="290" mass="32645">MLKTVHQKAGRHTRPVRAWLKLLWQRIDEDNMTTLAGNLAYVSLLSLVPLIAVVFALFAAFPMFSDVSIQLRHFIFANFMPATGDVIQRYIEQFVANSNKMTAVGACGLIVTALLLMYAIDSALNTIWRSKRTRPKVYSFAVYWMILTLGPLLAGASLAISSYLLSLRWASDLNTVIDNVLRILPLLLSWISFWLLYSIVPTTRVPNRDALVGAFVAALLFEAGKKGFALYITMFPSYQLIYGVLAVIPILFVWVYWTWCIVLLGAEITVTLGEYRKLKQAAEQEEADQP</sequence>
<comment type="subcellular location">
    <subcellularLocation>
        <location evidence="1">Cell inner membrane</location>
        <topology evidence="1">Multi-pass membrane protein</topology>
    </subcellularLocation>
</comment>
<comment type="similarity">
    <text evidence="1">Belongs to the UPF0761 family.</text>
</comment>
<reference key="1">
    <citation type="journal article" date="2011" name="J. Bacteriol.">
        <title>Comparative genomics of 28 Salmonella enterica isolates: evidence for CRISPR-mediated adaptive sublineage evolution.</title>
        <authorList>
            <person name="Fricke W.F."/>
            <person name="Mammel M.K."/>
            <person name="McDermott P.F."/>
            <person name="Tartera C."/>
            <person name="White D.G."/>
            <person name="Leclerc J.E."/>
            <person name="Ravel J."/>
            <person name="Cebula T.A."/>
        </authorList>
    </citation>
    <scope>NUCLEOTIDE SEQUENCE [LARGE SCALE GENOMIC DNA]</scope>
    <source>
        <strain>CVM19633</strain>
    </source>
</reference>
<proteinExistence type="inferred from homology"/>
<organism>
    <name type="scientific">Salmonella schwarzengrund (strain CVM19633)</name>
    <dbReference type="NCBI Taxonomy" id="439843"/>
    <lineage>
        <taxon>Bacteria</taxon>
        <taxon>Pseudomonadati</taxon>
        <taxon>Pseudomonadota</taxon>
        <taxon>Gammaproteobacteria</taxon>
        <taxon>Enterobacterales</taxon>
        <taxon>Enterobacteriaceae</taxon>
        <taxon>Salmonella</taxon>
    </lineage>
</organism>
<protein>
    <recommendedName>
        <fullName evidence="1">UPF0761 membrane protein YihY</fullName>
    </recommendedName>
</protein>
<name>YIHY_SALSV</name>
<evidence type="ECO:0000255" key="1">
    <source>
        <dbReference type="HAMAP-Rule" id="MF_00672"/>
    </source>
</evidence>
<gene>
    <name evidence="1" type="primary">yihY</name>
    <name type="ordered locus">SeSA_A4238</name>
</gene>
<feature type="chain" id="PRO_1000131565" description="UPF0761 membrane protein YihY">
    <location>
        <begin position="1"/>
        <end position="290"/>
    </location>
</feature>
<feature type="transmembrane region" description="Helical" evidence="1">
    <location>
        <begin position="44"/>
        <end position="64"/>
    </location>
</feature>
<feature type="transmembrane region" description="Helical" evidence="1">
    <location>
        <begin position="104"/>
        <end position="124"/>
    </location>
</feature>
<feature type="transmembrane region" description="Helical" evidence="1">
    <location>
        <begin position="140"/>
        <end position="160"/>
    </location>
</feature>
<feature type="transmembrane region" description="Helical" evidence="1">
    <location>
        <begin position="183"/>
        <end position="203"/>
    </location>
</feature>
<feature type="transmembrane region" description="Helical" evidence="1">
    <location>
        <begin position="210"/>
        <end position="230"/>
    </location>
</feature>
<feature type="transmembrane region" description="Helical" evidence="1">
    <location>
        <begin position="244"/>
        <end position="264"/>
    </location>
</feature>